<evidence type="ECO:0000255" key="1"/>
<evidence type="ECO:0000303" key="2">
    <source>
    </source>
</evidence>
<evidence type="ECO:0000305" key="3"/>
<evidence type="ECO:0000305" key="4">
    <source>
    </source>
</evidence>
<comment type="subcellular location">
    <subcellularLocation>
        <location evidence="4">Secreted</location>
    </subcellularLocation>
</comment>
<comment type="tissue specificity">
    <text evidence="4">Expressed by the venom gland.</text>
</comment>
<comment type="PTM">
    <text evidence="3">Contains 3 disulfide bonds.</text>
</comment>
<comment type="similarity">
    <text evidence="3">Belongs to the scoloptoxin-10 family.</text>
</comment>
<comment type="caution">
    <text evidence="4">All E.rubripes family members described in 'Undeheim et al., 2014' have not been imported into UniProtKB. Please, refer to this paper to access them.</text>
</comment>
<comment type="online information" name="National Center for Biotechnology Information (NCBI)">
    <link uri="https://www.ncbi.nlm.nih.gov/nuccore/GASI01000097"/>
</comment>
<organism>
    <name type="scientific">Ethmostigmus rubripes</name>
    <name type="common">Giant centipede</name>
    <dbReference type="NCBI Taxonomy" id="62613"/>
    <lineage>
        <taxon>Eukaryota</taxon>
        <taxon>Metazoa</taxon>
        <taxon>Ecdysozoa</taxon>
        <taxon>Arthropoda</taxon>
        <taxon>Myriapoda</taxon>
        <taxon>Chilopoda</taxon>
        <taxon>Pleurostigmophora</taxon>
        <taxon>Scolopendromorpha</taxon>
        <taxon>Scolopendridae</taxon>
        <taxon>Ethmostigmus</taxon>
    </lineage>
</organism>
<dbReference type="SMR" id="P0DPY3"/>
<dbReference type="GO" id="GO:0005576">
    <property type="term" value="C:extracellular region"/>
    <property type="evidence" value="ECO:0007669"/>
    <property type="project" value="UniProtKB-SubCell"/>
</dbReference>
<dbReference type="GO" id="GO:0090729">
    <property type="term" value="F:toxin activity"/>
    <property type="evidence" value="ECO:0007669"/>
    <property type="project" value="UniProtKB-KW"/>
</dbReference>
<reference key="1">
    <citation type="journal article" date="2014" name="Mol. Biol. Evol.">
        <title>Clawing through evolution: toxin diversification and convergence in the ancient lineage Chilopoda (centipedes).</title>
        <authorList>
            <person name="Undheim E.A."/>
            <person name="Jones A."/>
            <person name="Clauser K.R."/>
            <person name="Holland J.W."/>
            <person name="Pineda S.S."/>
            <person name="King G.F."/>
            <person name="Fry B.G."/>
        </authorList>
    </citation>
    <scope>NUCLEOTIDE SEQUENCE [MRNA]</scope>
    <scope>NOMENCLATURE</scope>
    <source>
        <tissue>Venom gland</tissue>
    </source>
</reference>
<proteinExistence type="inferred from homology"/>
<feature type="signal peptide" evidence="1">
    <location>
        <begin position="1"/>
        <end position="24"/>
    </location>
</feature>
<feature type="chain" id="PRO_0000446749" description="U-scoloptoxin(10)-Er1a" evidence="3">
    <location>
        <begin position="25"/>
        <end position="84"/>
    </location>
</feature>
<sequence>MSRFCLLFVAFGFVLYFLHMEVTGKRTREDILKEAEQKGPEIKAMILENVQKCKTNCALHLKYEKCNELVPECCPKETPKCKSV</sequence>
<keyword id="KW-1015">Disulfide bond</keyword>
<keyword id="KW-0964">Secreted</keyword>
<keyword id="KW-0732">Signal</keyword>
<keyword id="KW-0800">Toxin</keyword>
<name>TXA1A_ETHRU</name>
<accession>P0DPY3</accession>
<protein>
    <recommendedName>
        <fullName evidence="2">U-scoloptoxin(10)-Er1a</fullName>
        <shortName evidence="2">U-SLPTX(10)-Er1a</shortName>
    </recommendedName>
</protein>